<feature type="chain" id="PRO_0000297316" description="3-methyl-2-oxobutanoate hydroxymethyltransferase">
    <location>
        <begin position="1"/>
        <end position="267"/>
    </location>
</feature>
<feature type="active site" description="Proton acceptor" evidence="1">
    <location>
        <position position="184"/>
    </location>
</feature>
<feature type="binding site" evidence="1">
    <location>
        <begin position="46"/>
        <end position="47"/>
    </location>
    <ligand>
        <name>3-methyl-2-oxobutanoate</name>
        <dbReference type="ChEBI" id="CHEBI:11851"/>
    </ligand>
</feature>
<feature type="binding site" evidence="1">
    <location>
        <position position="46"/>
    </location>
    <ligand>
        <name>Mg(2+)</name>
        <dbReference type="ChEBI" id="CHEBI:18420"/>
    </ligand>
</feature>
<feature type="binding site" evidence="1">
    <location>
        <position position="85"/>
    </location>
    <ligand>
        <name>3-methyl-2-oxobutanoate</name>
        <dbReference type="ChEBI" id="CHEBI:11851"/>
    </ligand>
</feature>
<feature type="binding site" evidence="1">
    <location>
        <position position="85"/>
    </location>
    <ligand>
        <name>Mg(2+)</name>
        <dbReference type="ChEBI" id="CHEBI:18420"/>
    </ligand>
</feature>
<feature type="binding site" evidence="1">
    <location>
        <position position="115"/>
    </location>
    <ligand>
        <name>3-methyl-2-oxobutanoate</name>
        <dbReference type="ChEBI" id="CHEBI:11851"/>
    </ligand>
</feature>
<feature type="binding site" evidence="1">
    <location>
        <position position="117"/>
    </location>
    <ligand>
        <name>Mg(2+)</name>
        <dbReference type="ChEBI" id="CHEBI:18420"/>
    </ligand>
</feature>
<name>PANB_SYNC1</name>
<keyword id="KW-0963">Cytoplasm</keyword>
<keyword id="KW-0460">Magnesium</keyword>
<keyword id="KW-0479">Metal-binding</keyword>
<keyword id="KW-0566">Pantothenate biosynthesis</keyword>
<keyword id="KW-1185">Reference proteome</keyword>
<keyword id="KW-0808">Transferase</keyword>
<organism>
    <name type="scientific">Syntrophotalea carbinolica (strain DSM 2380 / NBRC 103641 / GraBd1)</name>
    <name type="common">Pelobacter carbinolicus</name>
    <dbReference type="NCBI Taxonomy" id="338963"/>
    <lineage>
        <taxon>Bacteria</taxon>
        <taxon>Pseudomonadati</taxon>
        <taxon>Thermodesulfobacteriota</taxon>
        <taxon>Desulfuromonadia</taxon>
        <taxon>Desulfuromonadales</taxon>
        <taxon>Syntrophotaleaceae</taxon>
        <taxon>Syntrophotalea</taxon>
    </lineage>
</organism>
<accession>Q3A3I6</accession>
<sequence>MQKRKTVLDIQRMKAEGEKIAMLTAYDYPFARLMDLEGIDMVLVGDSVGPVVAGYDHTLPVTMDEMIYHCRAVARGLGQAFLVADMPFLSYQVDLREARLNAGRLVKEGCAQAVKLEGGEPVAEVIRTLVDMDIPVVGHIGLTPQSIHRMGGYKVQGKHDQQARQLMRDARAVQEAGAFAVVLEGIPAGLAGQITEALDIPTIGIGAGVDCDGQVLVIHDILGLCEKYSPRFVKRYADVASIIRQGVKEYIGDVKQGVFPGPEHSFS</sequence>
<proteinExistence type="inferred from homology"/>
<protein>
    <recommendedName>
        <fullName evidence="1">3-methyl-2-oxobutanoate hydroxymethyltransferase</fullName>
        <ecNumber evidence="1">2.1.2.11</ecNumber>
    </recommendedName>
    <alternativeName>
        <fullName evidence="1">Ketopantoate hydroxymethyltransferase</fullName>
        <shortName evidence="1">KPHMT</shortName>
    </alternativeName>
</protein>
<reference key="1">
    <citation type="submission" date="2005-10" db="EMBL/GenBank/DDBJ databases">
        <title>Complete sequence of Pelobacter carbinolicus DSM 2380.</title>
        <authorList>
            <person name="Copeland A."/>
            <person name="Lucas S."/>
            <person name="Lapidus A."/>
            <person name="Barry K."/>
            <person name="Detter J.C."/>
            <person name="Glavina T."/>
            <person name="Hammon N."/>
            <person name="Israni S."/>
            <person name="Pitluck S."/>
            <person name="Chertkov O."/>
            <person name="Schmutz J."/>
            <person name="Larimer F."/>
            <person name="Land M."/>
            <person name="Kyrpides N."/>
            <person name="Ivanova N."/>
            <person name="Richardson P."/>
        </authorList>
    </citation>
    <scope>NUCLEOTIDE SEQUENCE [LARGE SCALE GENOMIC DNA]</scope>
    <source>
        <strain>DSM 2380 / NBRC 103641 / GraBd1</strain>
    </source>
</reference>
<comment type="function">
    <text evidence="1">Catalyzes the reversible reaction in which hydroxymethyl group from 5,10-methylenetetrahydrofolate is transferred onto alpha-ketoisovalerate to form ketopantoate.</text>
</comment>
<comment type="catalytic activity">
    <reaction evidence="1">
        <text>3-methyl-2-oxobutanoate + (6R)-5,10-methylene-5,6,7,8-tetrahydrofolate + H2O = 2-dehydropantoate + (6S)-5,6,7,8-tetrahydrofolate</text>
        <dbReference type="Rhea" id="RHEA:11824"/>
        <dbReference type="ChEBI" id="CHEBI:11561"/>
        <dbReference type="ChEBI" id="CHEBI:11851"/>
        <dbReference type="ChEBI" id="CHEBI:15377"/>
        <dbReference type="ChEBI" id="CHEBI:15636"/>
        <dbReference type="ChEBI" id="CHEBI:57453"/>
        <dbReference type="EC" id="2.1.2.11"/>
    </reaction>
</comment>
<comment type="cofactor">
    <cofactor evidence="1">
        <name>Mg(2+)</name>
        <dbReference type="ChEBI" id="CHEBI:18420"/>
    </cofactor>
    <text evidence="1">Binds 1 Mg(2+) ion per subunit.</text>
</comment>
<comment type="pathway">
    <text evidence="1">Cofactor biosynthesis; (R)-pantothenate biosynthesis; (R)-pantoate from 3-methyl-2-oxobutanoate: step 1/2.</text>
</comment>
<comment type="subunit">
    <text evidence="1">Homodecamer; pentamer of dimers.</text>
</comment>
<comment type="subcellular location">
    <subcellularLocation>
        <location evidence="1">Cytoplasm</location>
    </subcellularLocation>
</comment>
<comment type="similarity">
    <text evidence="1">Belongs to the PanB family.</text>
</comment>
<dbReference type="EC" id="2.1.2.11" evidence="1"/>
<dbReference type="EMBL" id="CP000142">
    <property type="protein sequence ID" value="ABA89071.1"/>
    <property type="molecule type" value="Genomic_DNA"/>
</dbReference>
<dbReference type="RefSeq" id="WP_011341574.1">
    <property type="nucleotide sequence ID" value="NC_007498.2"/>
</dbReference>
<dbReference type="SMR" id="Q3A3I6"/>
<dbReference type="STRING" id="338963.Pcar_1830"/>
<dbReference type="KEGG" id="pca:Pcar_1830"/>
<dbReference type="eggNOG" id="COG0413">
    <property type="taxonomic scope" value="Bacteria"/>
</dbReference>
<dbReference type="HOGENOM" id="CLU_036645_1_0_7"/>
<dbReference type="OrthoDB" id="9781789at2"/>
<dbReference type="UniPathway" id="UPA00028">
    <property type="reaction ID" value="UER00003"/>
</dbReference>
<dbReference type="Proteomes" id="UP000002534">
    <property type="component" value="Chromosome"/>
</dbReference>
<dbReference type="GO" id="GO:0005737">
    <property type="term" value="C:cytoplasm"/>
    <property type="evidence" value="ECO:0007669"/>
    <property type="project" value="UniProtKB-SubCell"/>
</dbReference>
<dbReference type="GO" id="GO:0003864">
    <property type="term" value="F:3-methyl-2-oxobutanoate hydroxymethyltransferase activity"/>
    <property type="evidence" value="ECO:0007669"/>
    <property type="project" value="UniProtKB-UniRule"/>
</dbReference>
<dbReference type="GO" id="GO:0000287">
    <property type="term" value="F:magnesium ion binding"/>
    <property type="evidence" value="ECO:0007669"/>
    <property type="project" value="TreeGrafter"/>
</dbReference>
<dbReference type="GO" id="GO:0015940">
    <property type="term" value="P:pantothenate biosynthetic process"/>
    <property type="evidence" value="ECO:0007669"/>
    <property type="project" value="UniProtKB-UniRule"/>
</dbReference>
<dbReference type="CDD" id="cd06557">
    <property type="entry name" value="KPHMT-like"/>
    <property type="match status" value="1"/>
</dbReference>
<dbReference type="FunFam" id="3.20.20.60:FF:000003">
    <property type="entry name" value="3-methyl-2-oxobutanoate hydroxymethyltransferase"/>
    <property type="match status" value="1"/>
</dbReference>
<dbReference type="Gene3D" id="3.20.20.60">
    <property type="entry name" value="Phosphoenolpyruvate-binding domains"/>
    <property type="match status" value="1"/>
</dbReference>
<dbReference type="HAMAP" id="MF_00156">
    <property type="entry name" value="PanB"/>
    <property type="match status" value="1"/>
</dbReference>
<dbReference type="InterPro" id="IPR003700">
    <property type="entry name" value="Pantoate_hydroxy_MeTrfase"/>
</dbReference>
<dbReference type="InterPro" id="IPR015813">
    <property type="entry name" value="Pyrv/PenolPyrv_kinase-like_dom"/>
</dbReference>
<dbReference type="InterPro" id="IPR040442">
    <property type="entry name" value="Pyrv_kinase-like_dom_sf"/>
</dbReference>
<dbReference type="NCBIfam" id="TIGR00222">
    <property type="entry name" value="panB"/>
    <property type="match status" value="1"/>
</dbReference>
<dbReference type="NCBIfam" id="NF001452">
    <property type="entry name" value="PRK00311.1"/>
    <property type="match status" value="1"/>
</dbReference>
<dbReference type="PANTHER" id="PTHR20881">
    <property type="entry name" value="3-METHYL-2-OXOBUTANOATE HYDROXYMETHYLTRANSFERASE"/>
    <property type="match status" value="1"/>
</dbReference>
<dbReference type="PANTHER" id="PTHR20881:SF0">
    <property type="entry name" value="3-METHYL-2-OXOBUTANOATE HYDROXYMETHYLTRANSFERASE"/>
    <property type="match status" value="1"/>
</dbReference>
<dbReference type="Pfam" id="PF02548">
    <property type="entry name" value="Pantoate_transf"/>
    <property type="match status" value="1"/>
</dbReference>
<dbReference type="PIRSF" id="PIRSF000388">
    <property type="entry name" value="Pantoate_hydroxy_MeTrfase"/>
    <property type="match status" value="1"/>
</dbReference>
<dbReference type="SUPFAM" id="SSF51621">
    <property type="entry name" value="Phosphoenolpyruvate/pyruvate domain"/>
    <property type="match status" value="1"/>
</dbReference>
<evidence type="ECO:0000255" key="1">
    <source>
        <dbReference type="HAMAP-Rule" id="MF_00156"/>
    </source>
</evidence>
<gene>
    <name evidence="1" type="primary">panB</name>
    <name type="ordered locus">Pcar_1830</name>
</gene>